<proteinExistence type="inferred from homology"/>
<organism>
    <name type="scientific">Mycobacterium marinum (strain ATCC BAA-535 / M)</name>
    <dbReference type="NCBI Taxonomy" id="216594"/>
    <lineage>
        <taxon>Bacteria</taxon>
        <taxon>Bacillati</taxon>
        <taxon>Actinomycetota</taxon>
        <taxon>Actinomycetes</taxon>
        <taxon>Mycobacteriales</taxon>
        <taxon>Mycobacteriaceae</taxon>
        <taxon>Mycobacterium</taxon>
        <taxon>Mycobacterium ulcerans group</taxon>
    </lineage>
</organism>
<name>PUR7_MYCMM</name>
<dbReference type="EC" id="6.3.2.6" evidence="1"/>
<dbReference type="EMBL" id="CP000854">
    <property type="protein sequence ID" value="ACC43313.1"/>
    <property type="molecule type" value="Genomic_DNA"/>
</dbReference>
<dbReference type="RefSeq" id="WP_012396439.1">
    <property type="nucleotide sequence ID" value="NC_010612.1"/>
</dbReference>
<dbReference type="SMR" id="B2HH58"/>
<dbReference type="STRING" id="216594.MMAR_4909"/>
<dbReference type="KEGG" id="mmi:MMAR_4909"/>
<dbReference type="eggNOG" id="COG0152">
    <property type="taxonomic scope" value="Bacteria"/>
</dbReference>
<dbReference type="HOGENOM" id="CLU_045637_0_0_11"/>
<dbReference type="OrthoDB" id="9801549at2"/>
<dbReference type="UniPathway" id="UPA00074">
    <property type="reaction ID" value="UER00131"/>
</dbReference>
<dbReference type="Proteomes" id="UP000001190">
    <property type="component" value="Chromosome"/>
</dbReference>
<dbReference type="GO" id="GO:0005737">
    <property type="term" value="C:cytoplasm"/>
    <property type="evidence" value="ECO:0007669"/>
    <property type="project" value="TreeGrafter"/>
</dbReference>
<dbReference type="GO" id="GO:0005524">
    <property type="term" value="F:ATP binding"/>
    <property type="evidence" value="ECO:0007669"/>
    <property type="project" value="UniProtKB-KW"/>
</dbReference>
<dbReference type="GO" id="GO:0004639">
    <property type="term" value="F:phosphoribosylaminoimidazolesuccinocarboxamide synthase activity"/>
    <property type="evidence" value="ECO:0007669"/>
    <property type="project" value="UniProtKB-UniRule"/>
</dbReference>
<dbReference type="GO" id="GO:0006189">
    <property type="term" value="P:'de novo' IMP biosynthetic process"/>
    <property type="evidence" value="ECO:0007669"/>
    <property type="project" value="UniProtKB-UniRule"/>
</dbReference>
<dbReference type="CDD" id="cd01414">
    <property type="entry name" value="SAICAR_synt_Sc"/>
    <property type="match status" value="1"/>
</dbReference>
<dbReference type="FunFam" id="3.30.200.20:FF:000199">
    <property type="entry name" value="Phosphoribosylaminoimidazole-succinocarboxamide synthase"/>
    <property type="match status" value="1"/>
</dbReference>
<dbReference type="FunFam" id="3.30.470.20:FF:000015">
    <property type="entry name" value="Phosphoribosylaminoimidazole-succinocarboxamide synthase"/>
    <property type="match status" value="1"/>
</dbReference>
<dbReference type="Gene3D" id="3.30.470.20">
    <property type="entry name" value="ATP-grasp fold, B domain"/>
    <property type="match status" value="1"/>
</dbReference>
<dbReference type="Gene3D" id="3.30.200.20">
    <property type="entry name" value="Phosphorylase Kinase, domain 1"/>
    <property type="match status" value="1"/>
</dbReference>
<dbReference type="HAMAP" id="MF_00137">
    <property type="entry name" value="SAICAR_synth"/>
    <property type="match status" value="1"/>
</dbReference>
<dbReference type="InterPro" id="IPR028923">
    <property type="entry name" value="SAICAR_synt/ADE2_N"/>
</dbReference>
<dbReference type="InterPro" id="IPR001636">
    <property type="entry name" value="SAICAR_synth"/>
</dbReference>
<dbReference type="InterPro" id="IPR018236">
    <property type="entry name" value="SAICAR_synthetase_CS"/>
</dbReference>
<dbReference type="NCBIfam" id="NF010568">
    <property type="entry name" value="PRK13961.1"/>
    <property type="match status" value="1"/>
</dbReference>
<dbReference type="NCBIfam" id="TIGR00081">
    <property type="entry name" value="purC"/>
    <property type="match status" value="1"/>
</dbReference>
<dbReference type="PANTHER" id="PTHR43700">
    <property type="entry name" value="PHOSPHORIBOSYLAMINOIMIDAZOLE-SUCCINOCARBOXAMIDE SYNTHASE"/>
    <property type="match status" value="1"/>
</dbReference>
<dbReference type="PANTHER" id="PTHR43700:SF1">
    <property type="entry name" value="PHOSPHORIBOSYLAMINOIMIDAZOLE-SUCCINOCARBOXAMIDE SYNTHASE"/>
    <property type="match status" value="1"/>
</dbReference>
<dbReference type="Pfam" id="PF01259">
    <property type="entry name" value="SAICAR_synt"/>
    <property type="match status" value="1"/>
</dbReference>
<dbReference type="SUPFAM" id="SSF56104">
    <property type="entry name" value="SAICAR synthase-like"/>
    <property type="match status" value="1"/>
</dbReference>
<dbReference type="PROSITE" id="PS01057">
    <property type="entry name" value="SAICAR_SYNTHETASE_1"/>
    <property type="match status" value="1"/>
</dbReference>
<dbReference type="PROSITE" id="PS01058">
    <property type="entry name" value="SAICAR_SYNTHETASE_2"/>
    <property type="match status" value="1"/>
</dbReference>
<reference key="1">
    <citation type="journal article" date="2008" name="Genome Res.">
        <title>Insights from the complete genome sequence of Mycobacterium marinum on the evolution of Mycobacterium tuberculosis.</title>
        <authorList>
            <person name="Stinear T.P."/>
            <person name="Seemann T."/>
            <person name="Harrison P.F."/>
            <person name="Jenkin G.A."/>
            <person name="Davies J.K."/>
            <person name="Johnson P.D."/>
            <person name="Abdellah Z."/>
            <person name="Arrowsmith C."/>
            <person name="Chillingworth T."/>
            <person name="Churcher C."/>
            <person name="Clarke K."/>
            <person name="Cronin A."/>
            <person name="Davis P."/>
            <person name="Goodhead I."/>
            <person name="Holroyd N."/>
            <person name="Jagels K."/>
            <person name="Lord A."/>
            <person name="Moule S."/>
            <person name="Mungall K."/>
            <person name="Norbertczak H."/>
            <person name="Quail M.A."/>
            <person name="Rabbinowitsch E."/>
            <person name="Walker D."/>
            <person name="White B."/>
            <person name="Whitehead S."/>
            <person name="Small P.L."/>
            <person name="Brosch R."/>
            <person name="Ramakrishnan L."/>
            <person name="Fischbach M.A."/>
            <person name="Parkhill J."/>
            <person name="Cole S.T."/>
        </authorList>
    </citation>
    <scope>NUCLEOTIDE SEQUENCE [LARGE SCALE GENOMIC DNA]</scope>
    <source>
        <strain>ATCC BAA-535 / M</strain>
    </source>
</reference>
<gene>
    <name evidence="1" type="primary">purC</name>
    <name type="ordered locus">MMAR_4909</name>
</gene>
<feature type="chain" id="PRO_1000095996" description="Phosphoribosylaminoimidazole-succinocarboxamide synthase">
    <location>
        <begin position="1"/>
        <end position="297"/>
    </location>
</feature>
<keyword id="KW-0067">ATP-binding</keyword>
<keyword id="KW-0436">Ligase</keyword>
<keyword id="KW-0547">Nucleotide-binding</keyword>
<keyword id="KW-0658">Purine biosynthesis</keyword>
<keyword id="KW-1185">Reference proteome</keyword>
<comment type="catalytic activity">
    <reaction evidence="1">
        <text>5-amino-1-(5-phospho-D-ribosyl)imidazole-4-carboxylate + L-aspartate + ATP = (2S)-2-[5-amino-1-(5-phospho-beta-D-ribosyl)imidazole-4-carboxamido]succinate + ADP + phosphate + 2 H(+)</text>
        <dbReference type="Rhea" id="RHEA:22628"/>
        <dbReference type="ChEBI" id="CHEBI:15378"/>
        <dbReference type="ChEBI" id="CHEBI:29991"/>
        <dbReference type="ChEBI" id="CHEBI:30616"/>
        <dbReference type="ChEBI" id="CHEBI:43474"/>
        <dbReference type="ChEBI" id="CHEBI:58443"/>
        <dbReference type="ChEBI" id="CHEBI:77657"/>
        <dbReference type="ChEBI" id="CHEBI:456216"/>
        <dbReference type="EC" id="6.3.2.6"/>
    </reaction>
</comment>
<comment type="pathway">
    <text evidence="1">Purine metabolism; IMP biosynthesis via de novo pathway; 5-amino-1-(5-phospho-D-ribosyl)imidazole-4-carboxamide from 5-amino-1-(5-phospho-D-ribosyl)imidazole-4-carboxylate: step 1/2.</text>
</comment>
<comment type="similarity">
    <text evidence="1">Belongs to the SAICAR synthetase family.</text>
</comment>
<evidence type="ECO:0000255" key="1">
    <source>
        <dbReference type="HAMAP-Rule" id="MF_00137"/>
    </source>
</evidence>
<protein>
    <recommendedName>
        <fullName evidence="1">Phosphoribosylaminoimidazole-succinocarboxamide synthase</fullName>
        <ecNumber evidence="1">6.3.2.6</ecNumber>
    </recommendedName>
    <alternativeName>
        <fullName evidence="1">SAICAR synthetase</fullName>
    </alternativeName>
</protein>
<accession>B2HH58</accession>
<sequence length="297" mass="32736">MRPQLSDYQHLASGKVRELYRVDDEHLLLVASDRISAYDYVLDSMIPDKGRILTAMSVFFFGLVDAPNHLAGPPDDPRIPDEVLGRALVVCQLEMLPVECVARGYLTGSGLLDYQASGKVCGIALPPGLVEASKFAEPLFTPATKAELGDHDENISFAQVIETVGGVRANQLRDRTLQIYVKAADHALTRGIIIADTKFEFGADRDGNLLLADEIFTPDSSRYWPADEYRAGVVQNSFDKQFVRNWLTSAESGWDRGGDQPPPPLPDHIIAATRERYIEAYERISGLSFGEWIGPGA</sequence>